<proteinExistence type="inferred from homology"/>
<feature type="chain" id="PRO_1000125638" description="Aminomethyltransferase">
    <location>
        <begin position="1"/>
        <end position="364"/>
    </location>
</feature>
<evidence type="ECO:0000255" key="1">
    <source>
        <dbReference type="HAMAP-Rule" id="MF_00259"/>
    </source>
</evidence>
<sequence length="364" mass="40147">MAQQTPLYEQHTLCGARMVDFHGWMMPLHYGSQIDEHHAVRTDAGMFDVSHMTIVDLRGSRTREFLRYLLANDVAKLTKSGKALYSGMLNASGGVIDDLIVYYFTEDFFRLVVNSATREKDLSWITQHAEPFGIEITVRDDLSMIAVQGPNAQAKAATLFNDAQRQAVEGMKPFFGVQAGDLFIATTGYTGEAGYEIALPNEKAADFWRALVEAGVKPCGLGARDTLRLEAGMNLYGQEMDETISPLAANMGWTIAWEPADRDFIGREALEVQREHGTEKLVGLVMTEKGVLRNELPVRFTDAQGNQHEGIITSGTFSPTLGYSIALARVPEGIGETAIVQIRNREMPVKVTKPVFVRNGKAVA</sequence>
<reference key="1">
    <citation type="journal article" date="2009" name="PLoS Genet.">
        <title>Organised genome dynamics in the Escherichia coli species results in highly diverse adaptive paths.</title>
        <authorList>
            <person name="Touchon M."/>
            <person name="Hoede C."/>
            <person name="Tenaillon O."/>
            <person name="Barbe V."/>
            <person name="Baeriswyl S."/>
            <person name="Bidet P."/>
            <person name="Bingen E."/>
            <person name="Bonacorsi S."/>
            <person name="Bouchier C."/>
            <person name="Bouvet O."/>
            <person name="Calteau A."/>
            <person name="Chiapello H."/>
            <person name="Clermont O."/>
            <person name="Cruveiller S."/>
            <person name="Danchin A."/>
            <person name="Diard M."/>
            <person name="Dossat C."/>
            <person name="Karoui M.E."/>
            <person name="Frapy E."/>
            <person name="Garry L."/>
            <person name="Ghigo J.M."/>
            <person name="Gilles A.M."/>
            <person name="Johnson J."/>
            <person name="Le Bouguenec C."/>
            <person name="Lescat M."/>
            <person name="Mangenot S."/>
            <person name="Martinez-Jehanne V."/>
            <person name="Matic I."/>
            <person name="Nassif X."/>
            <person name="Oztas S."/>
            <person name="Petit M.A."/>
            <person name="Pichon C."/>
            <person name="Rouy Z."/>
            <person name="Ruf C.S."/>
            <person name="Schneider D."/>
            <person name="Tourret J."/>
            <person name="Vacherie B."/>
            <person name="Vallenet D."/>
            <person name="Medigue C."/>
            <person name="Rocha E.P.C."/>
            <person name="Denamur E."/>
        </authorList>
    </citation>
    <scope>NUCLEOTIDE SEQUENCE [LARGE SCALE GENOMIC DNA]</scope>
    <source>
        <strain>55989 / EAEC</strain>
    </source>
</reference>
<name>GCST_ECO55</name>
<organism>
    <name type="scientific">Escherichia coli (strain 55989 / EAEC)</name>
    <dbReference type="NCBI Taxonomy" id="585055"/>
    <lineage>
        <taxon>Bacteria</taxon>
        <taxon>Pseudomonadati</taxon>
        <taxon>Pseudomonadota</taxon>
        <taxon>Gammaproteobacteria</taxon>
        <taxon>Enterobacterales</taxon>
        <taxon>Enterobacteriaceae</taxon>
        <taxon>Escherichia</taxon>
    </lineage>
</organism>
<comment type="function">
    <text evidence="1">The glycine cleavage system catalyzes the degradation of glycine.</text>
</comment>
<comment type="catalytic activity">
    <reaction evidence="1">
        <text>N(6)-[(R)-S(8)-aminomethyldihydrolipoyl]-L-lysyl-[protein] + (6S)-5,6,7,8-tetrahydrofolate = N(6)-[(R)-dihydrolipoyl]-L-lysyl-[protein] + (6R)-5,10-methylene-5,6,7,8-tetrahydrofolate + NH4(+)</text>
        <dbReference type="Rhea" id="RHEA:16945"/>
        <dbReference type="Rhea" id="RHEA-COMP:10475"/>
        <dbReference type="Rhea" id="RHEA-COMP:10492"/>
        <dbReference type="ChEBI" id="CHEBI:15636"/>
        <dbReference type="ChEBI" id="CHEBI:28938"/>
        <dbReference type="ChEBI" id="CHEBI:57453"/>
        <dbReference type="ChEBI" id="CHEBI:83100"/>
        <dbReference type="ChEBI" id="CHEBI:83143"/>
        <dbReference type="EC" id="2.1.2.10"/>
    </reaction>
</comment>
<comment type="subunit">
    <text evidence="1">The glycine cleavage system is composed of four proteins: P, T, L and H.</text>
</comment>
<comment type="similarity">
    <text evidence="1">Belongs to the GcvT family.</text>
</comment>
<keyword id="KW-0032">Aminotransferase</keyword>
<keyword id="KW-1185">Reference proteome</keyword>
<keyword id="KW-0808">Transferase</keyword>
<protein>
    <recommendedName>
        <fullName evidence="1">Aminomethyltransferase</fullName>
        <ecNumber evidence="1">2.1.2.10</ecNumber>
    </recommendedName>
    <alternativeName>
        <fullName evidence="1">Glycine cleavage system T protein</fullName>
    </alternativeName>
</protein>
<dbReference type="EC" id="2.1.2.10" evidence="1"/>
<dbReference type="EMBL" id="CU928145">
    <property type="protein sequence ID" value="CAU99160.1"/>
    <property type="molecule type" value="Genomic_DNA"/>
</dbReference>
<dbReference type="RefSeq" id="WP_000068701.1">
    <property type="nucleotide sequence ID" value="NC_011748.1"/>
</dbReference>
<dbReference type="SMR" id="B7LF91"/>
<dbReference type="GeneID" id="75205258"/>
<dbReference type="KEGG" id="eck:EC55989_3192"/>
<dbReference type="HOGENOM" id="CLU_007884_10_2_6"/>
<dbReference type="Proteomes" id="UP000000746">
    <property type="component" value="Chromosome"/>
</dbReference>
<dbReference type="GO" id="GO:0005829">
    <property type="term" value="C:cytosol"/>
    <property type="evidence" value="ECO:0007669"/>
    <property type="project" value="TreeGrafter"/>
</dbReference>
<dbReference type="GO" id="GO:0005960">
    <property type="term" value="C:glycine cleavage complex"/>
    <property type="evidence" value="ECO:0007669"/>
    <property type="project" value="InterPro"/>
</dbReference>
<dbReference type="GO" id="GO:0004047">
    <property type="term" value="F:aminomethyltransferase activity"/>
    <property type="evidence" value="ECO:0007669"/>
    <property type="project" value="UniProtKB-UniRule"/>
</dbReference>
<dbReference type="GO" id="GO:0008483">
    <property type="term" value="F:transaminase activity"/>
    <property type="evidence" value="ECO:0007669"/>
    <property type="project" value="UniProtKB-KW"/>
</dbReference>
<dbReference type="GO" id="GO:0019464">
    <property type="term" value="P:glycine decarboxylation via glycine cleavage system"/>
    <property type="evidence" value="ECO:0007669"/>
    <property type="project" value="UniProtKB-UniRule"/>
</dbReference>
<dbReference type="FunFam" id="2.40.30.110:FF:000001">
    <property type="entry name" value="Aminomethyltransferase"/>
    <property type="match status" value="1"/>
</dbReference>
<dbReference type="FunFam" id="3.30.70.1400:FF:000001">
    <property type="entry name" value="Aminomethyltransferase"/>
    <property type="match status" value="1"/>
</dbReference>
<dbReference type="FunFam" id="4.10.1250.10:FF:000001">
    <property type="entry name" value="Aminomethyltransferase"/>
    <property type="match status" value="1"/>
</dbReference>
<dbReference type="Gene3D" id="2.40.30.110">
    <property type="entry name" value="Aminomethyltransferase beta-barrel domains"/>
    <property type="match status" value="1"/>
</dbReference>
<dbReference type="Gene3D" id="3.30.70.1400">
    <property type="entry name" value="Aminomethyltransferase beta-barrel domains"/>
    <property type="match status" value="1"/>
</dbReference>
<dbReference type="Gene3D" id="4.10.1250.10">
    <property type="entry name" value="Aminomethyltransferase fragment"/>
    <property type="match status" value="1"/>
</dbReference>
<dbReference type="Gene3D" id="3.30.1360.120">
    <property type="entry name" value="Probable tRNA modification gtpase trme, domain 1"/>
    <property type="match status" value="1"/>
</dbReference>
<dbReference type="HAMAP" id="MF_00259">
    <property type="entry name" value="GcvT"/>
    <property type="match status" value="1"/>
</dbReference>
<dbReference type="InterPro" id="IPR006223">
    <property type="entry name" value="GCS_T"/>
</dbReference>
<dbReference type="InterPro" id="IPR022903">
    <property type="entry name" value="GCS_T_bac"/>
</dbReference>
<dbReference type="InterPro" id="IPR013977">
    <property type="entry name" value="GCST_C"/>
</dbReference>
<dbReference type="InterPro" id="IPR006222">
    <property type="entry name" value="GCV_T_N"/>
</dbReference>
<dbReference type="InterPro" id="IPR028896">
    <property type="entry name" value="GcvT/YgfZ/DmdA"/>
</dbReference>
<dbReference type="InterPro" id="IPR029043">
    <property type="entry name" value="GcvT/YgfZ_C"/>
</dbReference>
<dbReference type="InterPro" id="IPR027266">
    <property type="entry name" value="TrmE/GcvT_dom1"/>
</dbReference>
<dbReference type="NCBIfam" id="TIGR00528">
    <property type="entry name" value="gcvT"/>
    <property type="match status" value="1"/>
</dbReference>
<dbReference type="NCBIfam" id="NF001567">
    <property type="entry name" value="PRK00389.1"/>
    <property type="match status" value="1"/>
</dbReference>
<dbReference type="PANTHER" id="PTHR43757">
    <property type="entry name" value="AMINOMETHYLTRANSFERASE"/>
    <property type="match status" value="1"/>
</dbReference>
<dbReference type="PANTHER" id="PTHR43757:SF2">
    <property type="entry name" value="AMINOMETHYLTRANSFERASE, MITOCHONDRIAL"/>
    <property type="match status" value="1"/>
</dbReference>
<dbReference type="Pfam" id="PF01571">
    <property type="entry name" value="GCV_T"/>
    <property type="match status" value="1"/>
</dbReference>
<dbReference type="Pfam" id="PF08669">
    <property type="entry name" value="GCV_T_C"/>
    <property type="match status" value="1"/>
</dbReference>
<dbReference type="PIRSF" id="PIRSF006487">
    <property type="entry name" value="GcvT"/>
    <property type="match status" value="1"/>
</dbReference>
<dbReference type="SUPFAM" id="SSF101790">
    <property type="entry name" value="Aminomethyltransferase beta-barrel domain"/>
    <property type="match status" value="1"/>
</dbReference>
<dbReference type="SUPFAM" id="SSF103025">
    <property type="entry name" value="Folate-binding domain"/>
    <property type="match status" value="1"/>
</dbReference>
<gene>
    <name evidence="1" type="primary">gcvT</name>
    <name type="ordered locus">EC55989_3192</name>
</gene>
<accession>B7LF91</accession>